<feature type="chain" id="PRO_1000061375" description="Phycocyanobilin:ferredoxin oxidoreductase">
    <location>
        <begin position="1"/>
        <end position="264"/>
    </location>
</feature>
<protein>
    <recommendedName>
        <fullName evidence="1">Phycocyanobilin:ferredoxin oxidoreductase</fullName>
        <ecNumber evidence="1">1.3.7.5</ecNumber>
    </recommendedName>
</protein>
<accession>A2CA92</accession>
<dbReference type="EC" id="1.3.7.5" evidence="1"/>
<dbReference type="EMBL" id="CP000554">
    <property type="protein sequence ID" value="ABM78402.1"/>
    <property type="molecule type" value="Genomic_DNA"/>
</dbReference>
<dbReference type="RefSeq" id="WP_011826291.1">
    <property type="nucleotide sequence ID" value="NC_008820.1"/>
</dbReference>
<dbReference type="SMR" id="A2CA92"/>
<dbReference type="STRING" id="59922.P9303_16581"/>
<dbReference type="KEGG" id="pmf:P9303_16581"/>
<dbReference type="HOGENOM" id="CLU_074224_0_0_3"/>
<dbReference type="BioCyc" id="PMAR59922:G1G80-1441-MONOMER"/>
<dbReference type="Proteomes" id="UP000002274">
    <property type="component" value="Chromosome"/>
</dbReference>
<dbReference type="GO" id="GO:0050897">
    <property type="term" value="F:cobalt ion binding"/>
    <property type="evidence" value="ECO:0007669"/>
    <property type="project" value="InterPro"/>
</dbReference>
<dbReference type="GO" id="GO:0050620">
    <property type="term" value="F:phycocyanobilin:ferredoxin oxidoreductase activity"/>
    <property type="evidence" value="ECO:0007669"/>
    <property type="project" value="UniProtKB-UniRule"/>
</dbReference>
<dbReference type="GO" id="GO:0010024">
    <property type="term" value="P:phytochromobilin biosynthetic process"/>
    <property type="evidence" value="ECO:0007669"/>
    <property type="project" value="InterPro"/>
</dbReference>
<dbReference type="Gene3D" id="3.40.1500.20">
    <property type="match status" value="1"/>
</dbReference>
<dbReference type="HAMAP" id="MF_00618">
    <property type="entry name" value="Ferredoxin_bilin_red"/>
    <property type="match status" value="1"/>
</dbReference>
<dbReference type="InterPro" id="IPR009249">
    <property type="entry name" value="Ferredoxin-dep_bilin_Rdtase"/>
</dbReference>
<dbReference type="InterPro" id="IPR022870">
    <property type="entry name" value="Ferredoxin_bilin_OxRdtase"/>
</dbReference>
<dbReference type="NCBIfam" id="NF002760">
    <property type="entry name" value="PRK02816.1"/>
    <property type="match status" value="1"/>
</dbReference>
<dbReference type="PANTHER" id="PTHR34557">
    <property type="entry name" value="PHYTOCHROMOBILIN:FERREDOXIN OXIDOREDUCTASE, CHLOROPLASTIC"/>
    <property type="match status" value="1"/>
</dbReference>
<dbReference type="PANTHER" id="PTHR34557:SF1">
    <property type="entry name" value="PHYTOCHROMOBILIN:FERREDOXIN OXIDOREDUCTASE, CHLOROPLASTIC"/>
    <property type="match status" value="1"/>
</dbReference>
<dbReference type="Pfam" id="PF05996">
    <property type="entry name" value="Fe_bilin_red"/>
    <property type="match status" value="1"/>
</dbReference>
<keyword id="KW-0560">Oxidoreductase</keyword>
<name>PCYA_PROM3</name>
<reference key="1">
    <citation type="journal article" date="2007" name="PLoS Genet.">
        <title>Patterns and implications of gene gain and loss in the evolution of Prochlorococcus.</title>
        <authorList>
            <person name="Kettler G.C."/>
            <person name="Martiny A.C."/>
            <person name="Huang K."/>
            <person name="Zucker J."/>
            <person name="Coleman M.L."/>
            <person name="Rodrigue S."/>
            <person name="Chen F."/>
            <person name="Lapidus A."/>
            <person name="Ferriera S."/>
            <person name="Johnson J."/>
            <person name="Steglich C."/>
            <person name="Church G.M."/>
            <person name="Richardson P."/>
            <person name="Chisholm S.W."/>
        </authorList>
    </citation>
    <scope>NUCLEOTIDE SEQUENCE [LARGE SCALE GENOMIC DNA]</scope>
    <source>
        <strain>MIT 9303</strain>
    </source>
</reference>
<sequence>MERVRGACQSPILILLAIVLPFPSTSGPAIHPLIESLAARIRQRRAQLPELSPFALDSVMESISGQLDGEELLISNELHRCRGLRKLHLEIARLGGGLQVLHCVFFPDPRFDLPIFGADIVASPAGISAAIVDLSPVGLTMPVALLHGLESLPIPAFQQVRELPAWGSIFSPFVQFIRPASSEEESWFVDLADGYLKALISSVIDATPDASDAASTIQRHKSQLSYCIQQKRNDKTRGVLEKAFNPQWADRYIEEILFEDPPPL</sequence>
<gene>
    <name evidence="1" type="primary">pcyA</name>
    <name type="ordered locus">P9303_16581</name>
</gene>
<proteinExistence type="inferred from homology"/>
<evidence type="ECO:0000255" key="1">
    <source>
        <dbReference type="HAMAP-Rule" id="MF_00618"/>
    </source>
</evidence>
<comment type="function">
    <text evidence="1">Catalyzes the four-electron reduction of biliverdin IX-alpha (2-electron reduction at both the A and D rings); the reaction proceeds via an isolatable 2-electron intermediate, 181,182-dihydrobiliverdin.</text>
</comment>
<comment type="catalytic activity">
    <reaction evidence="1">
        <text>(2R,3Z)-phycocyanobilin + 4 oxidized [2Fe-2S]-[ferredoxin] = biliverdin IXalpha + 4 reduced [2Fe-2S]-[ferredoxin] + 4 H(+)</text>
        <dbReference type="Rhea" id="RHEA:15309"/>
        <dbReference type="Rhea" id="RHEA-COMP:10000"/>
        <dbReference type="Rhea" id="RHEA-COMP:10001"/>
        <dbReference type="ChEBI" id="CHEBI:15378"/>
        <dbReference type="ChEBI" id="CHEBI:33737"/>
        <dbReference type="ChEBI" id="CHEBI:33738"/>
        <dbReference type="ChEBI" id="CHEBI:57437"/>
        <dbReference type="ChEBI" id="CHEBI:57991"/>
        <dbReference type="EC" id="1.3.7.5"/>
    </reaction>
</comment>
<comment type="similarity">
    <text evidence="1">Belongs to the HY2 family.</text>
</comment>
<organism>
    <name type="scientific">Prochlorococcus marinus (strain MIT 9303)</name>
    <dbReference type="NCBI Taxonomy" id="59922"/>
    <lineage>
        <taxon>Bacteria</taxon>
        <taxon>Bacillati</taxon>
        <taxon>Cyanobacteriota</taxon>
        <taxon>Cyanophyceae</taxon>
        <taxon>Synechococcales</taxon>
        <taxon>Prochlorococcaceae</taxon>
        <taxon>Prochlorococcus</taxon>
    </lineage>
</organism>